<gene>
    <name evidence="7" type="primary">RRP15</name>
    <name type="ordered locus">YPR143W</name>
</gene>
<reference evidence="6" key="1">
    <citation type="journal article" date="1997" name="Nature">
        <title>The nucleotide sequence of Saccharomyces cerevisiae chromosome XVI.</title>
        <authorList>
            <person name="Bussey H."/>
            <person name="Storms R.K."/>
            <person name="Ahmed A."/>
            <person name="Albermann K."/>
            <person name="Allen E."/>
            <person name="Ansorge W."/>
            <person name="Araujo R."/>
            <person name="Aparicio A."/>
            <person name="Barrell B.G."/>
            <person name="Badcock K."/>
            <person name="Benes V."/>
            <person name="Botstein D."/>
            <person name="Bowman S."/>
            <person name="Brueckner M."/>
            <person name="Carpenter J."/>
            <person name="Cherry J.M."/>
            <person name="Chung E."/>
            <person name="Churcher C.M."/>
            <person name="Coster F."/>
            <person name="Davis K."/>
            <person name="Davis R.W."/>
            <person name="Dietrich F.S."/>
            <person name="Delius H."/>
            <person name="DiPaolo T."/>
            <person name="Dubois E."/>
            <person name="Duesterhoeft A."/>
            <person name="Duncan M."/>
            <person name="Floeth M."/>
            <person name="Fortin N."/>
            <person name="Friesen J.D."/>
            <person name="Fritz C."/>
            <person name="Goffeau A."/>
            <person name="Hall J."/>
            <person name="Hebling U."/>
            <person name="Heumann K."/>
            <person name="Hilbert H."/>
            <person name="Hillier L.W."/>
            <person name="Hunicke-Smith S."/>
            <person name="Hyman R.W."/>
            <person name="Johnston M."/>
            <person name="Kalman S."/>
            <person name="Kleine K."/>
            <person name="Komp C."/>
            <person name="Kurdi O."/>
            <person name="Lashkari D."/>
            <person name="Lew H."/>
            <person name="Lin A."/>
            <person name="Lin D."/>
            <person name="Louis E.J."/>
            <person name="Marathe R."/>
            <person name="Messenguy F."/>
            <person name="Mewes H.-W."/>
            <person name="Mirtipati S."/>
            <person name="Moestl D."/>
            <person name="Mueller-Auer S."/>
            <person name="Namath A."/>
            <person name="Nentwich U."/>
            <person name="Oefner P."/>
            <person name="Pearson D."/>
            <person name="Petel F.X."/>
            <person name="Pohl T.M."/>
            <person name="Purnelle B."/>
            <person name="Rajandream M.A."/>
            <person name="Rechmann S."/>
            <person name="Rieger M."/>
            <person name="Riles L."/>
            <person name="Roberts D."/>
            <person name="Schaefer M."/>
            <person name="Scharfe M."/>
            <person name="Scherens B."/>
            <person name="Schramm S."/>
            <person name="Schroeder M."/>
            <person name="Sdicu A.-M."/>
            <person name="Tettelin H."/>
            <person name="Urrestarazu L.A."/>
            <person name="Ushinsky S."/>
            <person name="Vierendeels F."/>
            <person name="Vissers S."/>
            <person name="Voss H."/>
            <person name="Walsh S.V."/>
            <person name="Wambutt R."/>
            <person name="Wang Y."/>
            <person name="Wedler E."/>
            <person name="Wedler H."/>
            <person name="Winnett E."/>
            <person name="Zhong W.-W."/>
            <person name="Zollner A."/>
            <person name="Vo D.H."/>
            <person name="Hani J."/>
        </authorList>
    </citation>
    <scope>NUCLEOTIDE SEQUENCE [LARGE SCALE GENOMIC DNA]</scope>
    <source>
        <strain>ATCC 204508 / S288c</strain>
    </source>
</reference>
<reference key="2">
    <citation type="journal article" date="2014" name="G3 (Bethesda)">
        <title>The reference genome sequence of Saccharomyces cerevisiae: Then and now.</title>
        <authorList>
            <person name="Engel S.R."/>
            <person name="Dietrich F.S."/>
            <person name="Fisk D.G."/>
            <person name="Binkley G."/>
            <person name="Balakrishnan R."/>
            <person name="Costanzo M.C."/>
            <person name="Dwight S.S."/>
            <person name="Hitz B.C."/>
            <person name="Karra K."/>
            <person name="Nash R.S."/>
            <person name="Weng S."/>
            <person name="Wong E.D."/>
            <person name="Lloyd P."/>
            <person name="Skrzypek M.S."/>
            <person name="Miyasato S.R."/>
            <person name="Simison M."/>
            <person name="Cherry J.M."/>
        </authorList>
    </citation>
    <scope>GENOME REANNOTATION</scope>
    <source>
        <strain>ATCC 204508 / S288c</strain>
    </source>
</reference>
<reference evidence="5" key="3">
    <citation type="journal article" date="2003" name="Nature">
        <title>Global analysis of protein localization in budding yeast.</title>
        <authorList>
            <person name="Huh W.-K."/>
            <person name="Falvo J.V."/>
            <person name="Gerke L.C."/>
            <person name="Carroll A.S."/>
            <person name="Howson R.W."/>
            <person name="Weissman J.S."/>
            <person name="O'Shea E.K."/>
        </authorList>
    </citation>
    <scope>SUBCELLULAR LOCATION [LARGE SCALE ANALYSIS]</scope>
</reference>
<reference evidence="5" key="4">
    <citation type="journal article" date="2003" name="Nature">
        <title>Global analysis of protein expression in yeast.</title>
        <authorList>
            <person name="Ghaemmaghami S."/>
            <person name="Huh W.-K."/>
            <person name="Bower K."/>
            <person name="Howson R.W."/>
            <person name="Belle A."/>
            <person name="Dephoure N."/>
            <person name="O'Shea E.K."/>
            <person name="Weissman J.S."/>
        </authorList>
    </citation>
    <scope>LEVEL OF PROTEIN EXPRESSION [LARGE SCALE ANALYSIS]</scope>
</reference>
<reference evidence="5" key="5">
    <citation type="journal article" date="2005" name="RNA">
        <title>Rrp15p, a novel component of pre-ribosomal particles required for 60S ribosome subunit maturation.</title>
        <authorList>
            <person name="De Marchis M.L."/>
            <person name="Giorgi A."/>
            <person name="Schinina M.E."/>
            <person name="Bozzoni I."/>
            <person name="Fatica A."/>
        </authorList>
    </citation>
    <scope>FUNCTION</scope>
</reference>
<reference key="6">
    <citation type="journal article" date="2007" name="J. Proteome Res.">
        <title>Large-scale phosphorylation analysis of alpha-factor-arrested Saccharomyces cerevisiae.</title>
        <authorList>
            <person name="Li X."/>
            <person name="Gerber S.A."/>
            <person name="Rudner A.D."/>
            <person name="Beausoleil S.A."/>
            <person name="Haas W."/>
            <person name="Villen J."/>
            <person name="Elias J.E."/>
            <person name="Gygi S.P."/>
        </authorList>
    </citation>
    <scope>PHOSPHORYLATION [LARGE SCALE ANALYSIS] AT SER-69</scope>
    <scope>IDENTIFICATION BY MASS SPECTROMETRY [LARGE SCALE ANALYSIS]</scope>
    <source>
        <strain>ADR376</strain>
    </source>
</reference>
<reference key="7">
    <citation type="journal article" date="2009" name="Science">
        <title>Global analysis of Cdk1 substrate phosphorylation sites provides insights into evolution.</title>
        <authorList>
            <person name="Holt L.J."/>
            <person name="Tuch B.B."/>
            <person name="Villen J."/>
            <person name="Johnson A.D."/>
            <person name="Gygi S.P."/>
            <person name="Morgan D.O."/>
        </authorList>
    </citation>
    <scope>PHOSPHORYLATION [LARGE SCALE ANALYSIS] AT SER-69</scope>
    <scope>IDENTIFICATION BY MASS SPECTROMETRY [LARGE SCALE ANALYSIS]</scope>
</reference>
<comment type="function">
    <text evidence="4">Constituent of pre-60S ribosomal particles. Required for large subunit rRNA maturation, in particular processing of the 27S pre-rRNA at the A3 and B1 sites to yield 5.8S and 25S rRNA.</text>
</comment>
<comment type="interaction">
    <interactant intactId="EBI-34602">
        <id>Q06511</id>
    </interactant>
    <interactant intactId="EBI-10930">
        <id>P20484</id>
        <label>MAK11</label>
    </interactant>
    <organismsDiffer>false</organismsDiffer>
    <experiments>4</experiments>
</comment>
<comment type="interaction">
    <interactant intactId="EBI-34602">
        <id>Q06511</id>
    </interactant>
    <interactant intactId="EBI-10944">
        <id>Q12176</id>
        <label>MAK21</label>
    </interactant>
    <organismsDiffer>false</organismsDiffer>
    <experiments>4</experiments>
</comment>
<comment type="interaction">
    <interactant intactId="EBI-34602">
        <id>Q06511</id>
    </interactant>
    <interactant intactId="EBI-18160">
        <id>P38789</id>
        <label>SSF1</label>
    </interactant>
    <organismsDiffer>false</organismsDiffer>
    <experiments>5</experiments>
</comment>
<comment type="interaction">
    <interactant intactId="EBI-34602">
        <id>Q06511</id>
    </interactant>
    <interactant intactId="EBI-18168">
        <id>Q12153</id>
        <label>SSF2</label>
    </interactant>
    <organismsDiffer>false</organismsDiffer>
    <experiments>6</experiments>
</comment>
<comment type="subcellular location">
    <subcellularLocation>
        <location evidence="2">Nucleus</location>
        <location evidence="2">Nucleolus</location>
    </subcellularLocation>
</comment>
<comment type="miscellaneous">
    <text evidence="3">Present with 6200 molecules/cell in log phase SD medium.</text>
</comment>
<comment type="similarity">
    <text evidence="5">Belongs to the RRP15 family.</text>
</comment>
<keyword id="KW-0002">3D-structure</keyword>
<keyword id="KW-0539">Nucleus</keyword>
<keyword id="KW-0597">Phosphoprotein</keyword>
<keyword id="KW-1185">Reference proteome</keyword>
<keyword id="KW-0690">Ribosome biogenesis</keyword>
<keyword id="KW-0698">rRNA processing</keyword>
<sequence>MGSKHRVDTKDKKRTRKNAEFGREKRNSGNQELSNEPEKDTIMEGDEAEEDEQNSSSDESSKIIDNEQSDAEEDDDEEEEDDDFPRKKKSKNSKHDDGSTGFSAAVNAILSSHLKAYDRKDPIMARNKKVLKQSESEKLEYKAKKALLAEKKKLLGKARKTDIIPIASGEDRSENIRKVLEKETALRKIAQKGAVKLFNAILATQVKTEKEVSENLSEIKNKEEKKELITEVSKEKFLDLVKAAAGSDNE</sequence>
<dbReference type="EMBL" id="U40829">
    <property type="protein sequence ID" value="AAB68282.1"/>
    <property type="molecule type" value="Genomic_DNA"/>
</dbReference>
<dbReference type="EMBL" id="BK006949">
    <property type="protein sequence ID" value="DAA11556.1"/>
    <property type="molecule type" value="Genomic_DNA"/>
</dbReference>
<dbReference type="PIR" id="S69031">
    <property type="entry name" value="S69031"/>
</dbReference>
<dbReference type="RefSeq" id="NP_015469.1">
    <property type="nucleotide sequence ID" value="NM_001184240.1"/>
</dbReference>
<dbReference type="PDB" id="6C0F">
    <property type="method" value="EM"/>
    <property type="resolution" value="3.70 A"/>
    <property type="chains" value="w=1-250"/>
</dbReference>
<dbReference type="PDB" id="8V83">
    <property type="method" value="EM"/>
    <property type="resolution" value="2.53 A"/>
    <property type="chains" value="T=1-250"/>
</dbReference>
<dbReference type="PDB" id="8V84">
    <property type="method" value="EM"/>
    <property type="resolution" value="2.70 A"/>
    <property type="chains" value="T=1-250"/>
</dbReference>
<dbReference type="PDBsum" id="6C0F"/>
<dbReference type="PDBsum" id="8V83"/>
<dbReference type="PDBsum" id="8V84"/>
<dbReference type="EMDB" id="EMD-43017"/>
<dbReference type="EMDB" id="EMD-43021"/>
<dbReference type="EMDB" id="EMD-7324"/>
<dbReference type="SMR" id="Q06511"/>
<dbReference type="BioGRID" id="36311">
    <property type="interactions" value="189"/>
</dbReference>
<dbReference type="DIP" id="DIP-6432N"/>
<dbReference type="FunCoup" id="Q06511">
    <property type="interactions" value="449"/>
</dbReference>
<dbReference type="IntAct" id="Q06511">
    <property type="interactions" value="56"/>
</dbReference>
<dbReference type="MINT" id="Q06511"/>
<dbReference type="STRING" id="4932.YPR143W"/>
<dbReference type="iPTMnet" id="Q06511"/>
<dbReference type="PaxDb" id="4932-YPR143W"/>
<dbReference type="PeptideAtlas" id="Q06511"/>
<dbReference type="EnsemblFungi" id="YPR143W_mRNA">
    <property type="protein sequence ID" value="YPR143W"/>
    <property type="gene ID" value="YPR143W"/>
</dbReference>
<dbReference type="GeneID" id="856264"/>
<dbReference type="KEGG" id="sce:YPR143W"/>
<dbReference type="AGR" id="SGD:S000006347"/>
<dbReference type="SGD" id="S000006347">
    <property type="gene designation" value="RRP15"/>
</dbReference>
<dbReference type="VEuPathDB" id="FungiDB:YPR143W"/>
<dbReference type="eggNOG" id="KOG2974">
    <property type="taxonomic scope" value="Eukaryota"/>
</dbReference>
<dbReference type="HOGENOM" id="CLU_058264_0_0_1"/>
<dbReference type="InParanoid" id="Q06511"/>
<dbReference type="OMA" id="FVKQRFY"/>
<dbReference type="OrthoDB" id="20949at2759"/>
<dbReference type="BioCyc" id="YEAST:G3O-34277-MONOMER"/>
<dbReference type="BioGRID-ORCS" id="856264">
    <property type="hits" value="1 hit in 10 CRISPR screens"/>
</dbReference>
<dbReference type="CD-CODE" id="BDAE0F88">
    <property type="entry name" value="Nucleolus"/>
</dbReference>
<dbReference type="PRO" id="PR:Q06511"/>
<dbReference type="Proteomes" id="UP000002311">
    <property type="component" value="Chromosome XVI"/>
</dbReference>
<dbReference type="RNAct" id="Q06511">
    <property type="molecule type" value="protein"/>
</dbReference>
<dbReference type="GO" id="GO:0005730">
    <property type="term" value="C:nucleolus"/>
    <property type="evidence" value="ECO:0007005"/>
    <property type="project" value="SGD"/>
</dbReference>
<dbReference type="GO" id="GO:0005634">
    <property type="term" value="C:nucleus"/>
    <property type="evidence" value="ECO:0007005"/>
    <property type="project" value="SGD"/>
</dbReference>
<dbReference type="GO" id="GO:0030687">
    <property type="term" value="C:preribosome, large subunit precursor"/>
    <property type="evidence" value="ECO:0000314"/>
    <property type="project" value="SGD"/>
</dbReference>
<dbReference type="GO" id="GO:0000460">
    <property type="term" value="P:maturation of 5.8S rRNA"/>
    <property type="evidence" value="ECO:0000318"/>
    <property type="project" value="GO_Central"/>
</dbReference>
<dbReference type="GO" id="GO:0000466">
    <property type="term" value="P:maturation of 5.8S rRNA from tricistronic rRNA transcript (SSU-rRNA, 5.8S rRNA, LSU-rRNA)"/>
    <property type="evidence" value="ECO:0000315"/>
    <property type="project" value="SGD"/>
</dbReference>
<dbReference type="GO" id="GO:0000470">
    <property type="term" value="P:maturation of LSU-rRNA"/>
    <property type="evidence" value="ECO:0000318"/>
    <property type="project" value="GO_Central"/>
</dbReference>
<dbReference type="GO" id="GO:0000463">
    <property type="term" value="P:maturation of LSU-rRNA from tricistronic rRNA transcript (SSU-rRNA, 5.8S rRNA, LSU-rRNA)"/>
    <property type="evidence" value="ECO:0000315"/>
    <property type="project" value="SGD"/>
</dbReference>
<dbReference type="InterPro" id="IPR012459">
    <property type="entry name" value="Rrp15"/>
</dbReference>
<dbReference type="PANTHER" id="PTHR13245">
    <property type="entry name" value="RRP15-LIKE PROTEIN"/>
    <property type="match status" value="1"/>
</dbReference>
<dbReference type="PANTHER" id="PTHR13245:SF14">
    <property type="entry name" value="RRP15-LIKE PROTEIN"/>
    <property type="match status" value="1"/>
</dbReference>
<dbReference type="Pfam" id="PF07890">
    <property type="entry name" value="Rrp15p"/>
    <property type="match status" value="1"/>
</dbReference>
<protein>
    <recommendedName>
        <fullName>Ribosomal RNA-processing protein 15</fullName>
    </recommendedName>
</protein>
<organism>
    <name type="scientific">Saccharomyces cerevisiae (strain ATCC 204508 / S288c)</name>
    <name type="common">Baker's yeast</name>
    <dbReference type="NCBI Taxonomy" id="559292"/>
    <lineage>
        <taxon>Eukaryota</taxon>
        <taxon>Fungi</taxon>
        <taxon>Dikarya</taxon>
        <taxon>Ascomycota</taxon>
        <taxon>Saccharomycotina</taxon>
        <taxon>Saccharomycetes</taxon>
        <taxon>Saccharomycetales</taxon>
        <taxon>Saccharomycetaceae</taxon>
        <taxon>Saccharomyces</taxon>
    </lineage>
</organism>
<feature type="chain" id="PRO_0000270562" description="Ribosomal RNA-processing protein 15">
    <location>
        <begin position="1"/>
        <end position="250"/>
    </location>
</feature>
<feature type="region of interest" description="Disordered" evidence="1">
    <location>
        <begin position="1"/>
        <end position="101"/>
    </location>
</feature>
<feature type="compositionally biased region" description="Basic and acidic residues" evidence="1">
    <location>
        <begin position="1"/>
        <end position="27"/>
    </location>
</feature>
<feature type="compositionally biased region" description="Acidic residues" evidence="1">
    <location>
        <begin position="43"/>
        <end position="53"/>
    </location>
</feature>
<feature type="compositionally biased region" description="Acidic residues" evidence="1">
    <location>
        <begin position="67"/>
        <end position="83"/>
    </location>
</feature>
<feature type="modified residue" description="Phosphoserine" evidence="8 9">
    <location>
        <position position="69"/>
    </location>
</feature>
<accession>Q06511</accession>
<accession>D6W4E0</accession>
<evidence type="ECO:0000256" key="1">
    <source>
        <dbReference type="SAM" id="MobiDB-lite"/>
    </source>
</evidence>
<evidence type="ECO:0000269" key="2">
    <source>
    </source>
</evidence>
<evidence type="ECO:0000269" key="3">
    <source>
    </source>
</evidence>
<evidence type="ECO:0000269" key="4">
    <source>
    </source>
</evidence>
<evidence type="ECO:0000305" key="5"/>
<evidence type="ECO:0000312" key="6">
    <source>
        <dbReference type="EMBL" id="AAB68282.1"/>
    </source>
</evidence>
<evidence type="ECO:0000312" key="7">
    <source>
        <dbReference type="SGD" id="S000006347"/>
    </source>
</evidence>
<evidence type="ECO:0007744" key="8">
    <source>
    </source>
</evidence>
<evidence type="ECO:0007744" key="9">
    <source>
    </source>
</evidence>
<name>RRP15_YEAST</name>
<proteinExistence type="evidence at protein level"/>